<proteinExistence type="inferred from homology"/>
<organism>
    <name type="scientific">Rhodococcus jostii (strain RHA1)</name>
    <dbReference type="NCBI Taxonomy" id="101510"/>
    <lineage>
        <taxon>Bacteria</taxon>
        <taxon>Bacillati</taxon>
        <taxon>Actinomycetota</taxon>
        <taxon>Actinomycetes</taxon>
        <taxon>Mycobacteriales</taxon>
        <taxon>Nocardiaceae</taxon>
        <taxon>Rhodococcus</taxon>
    </lineage>
</organism>
<name>RL3_RHOJR</name>
<protein>
    <recommendedName>
        <fullName evidence="1">Large ribosomal subunit protein uL3</fullName>
    </recommendedName>
    <alternativeName>
        <fullName evidence="2">50S ribosomal protein L3</fullName>
    </alternativeName>
</protein>
<evidence type="ECO:0000255" key="1">
    <source>
        <dbReference type="HAMAP-Rule" id="MF_01325"/>
    </source>
</evidence>
<evidence type="ECO:0000305" key="2"/>
<gene>
    <name evidence="1" type="primary">rplC</name>
    <name type="ordered locus">RHA1_ro06133</name>
</gene>
<reference key="1">
    <citation type="journal article" date="2006" name="Proc. Natl. Acad. Sci. U.S.A.">
        <title>The complete genome of Rhodococcus sp. RHA1 provides insights into a catabolic powerhouse.</title>
        <authorList>
            <person name="McLeod M.P."/>
            <person name="Warren R.L."/>
            <person name="Hsiao W.W.L."/>
            <person name="Araki N."/>
            <person name="Myhre M."/>
            <person name="Fernandes C."/>
            <person name="Miyazawa D."/>
            <person name="Wong W."/>
            <person name="Lillquist A.L."/>
            <person name="Wang D."/>
            <person name="Dosanjh M."/>
            <person name="Hara H."/>
            <person name="Petrescu A."/>
            <person name="Morin R.D."/>
            <person name="Yang G."/>
            <person name="Stott J.M."/>
            <person name="Schein J.E."/>
            <person name="Shin H."/>
            <person name="Smailus D."/>
            <person name="Siddiqui A.S."/>
            <person name="Marra M.A."/>
            <person name="Jones S.J.M."/>
            <person name="Holt R."/>
            <person name="Brinkman F.S.L."/>
            <person name="Miyauchi K."/>
            <person name="Fukuda M."/>
            <person name="Davies J.E."/>
            <person name="Mohn W.W."/>
            <person name="Eltis L.D."/>
        </authorList>
    </citation>
    <scope>NUCLEOTIDE SEQUENCE [LARGE SCALE GENOMIC DNA]</scope>
    <source>
        <strain>RHA1</strain>
    </source>
</reference>
<feature type="chain" id="PRO_1000052124" description="Large ribosomal subunit protein uL3">
    <location>
        <begin position="1"/>
        <end position="218"/>
    </location>
</feature>
<dbReference type="EMBL" id="CP000431">
    <property type="protein sequence ID" value="ABG97910.1"/>
    <property type="molecule type" value="Genomic_DNA"/>
</dbReference>
<dbReference type="RefSeq" id="WP_009479366.1">
    <property type="nucleotide sequence ID" value="NC_008268.1"/>
</dbReference>
<dbReference type="SMR" id="Q0S3H6"/>
<dbReference type="KEGG" id="rha:RHA1_ro06133"/>
<dbReference type="eggNOG" id="COG0087">
    <property type="taxonomic scope" value="Bacteria"/>
</dbReference>
<dbReference type="HOGENOM" id="CLU_044142_4_1_11"/>
<dbReference type="OrthoDB" id="9806135at2"/>
<dbReference type="Proteomes" id="UP000008710">
    <property type="component" value="Chromosome"/>
</dbReference>
<dbReference type="GO" id="GO:0022625">
    <property type="term" value="C:cytosolic large ribosomal subunit"/>
    <property type="evidence" value="ECO:0007669"/>
    <property type="project" value="TreeGrafter"/>
</dbReference>
<dbReference type="GO" id="GO:0019843">
    <property type="term" value="F:rRNA binding"/>
    <property type="evidence" value="ECO:0007669"/>
    <property type="project" value="UniProtKB-UniRule"/>
</dbReference>
<dbReference type="GO" id="GO:0003735">
    <property type="term" value="F:structural constituent of ribosome"/>
    <property type="evidence" value="ECO:0007669"/>
    <property type="project" value="InterPro"/>
</dbReference>
<dbReference type="GO" id="GO:0006412">
    <property type="term" value="P:translation"/>
    <property type="evidence" value="ECO:0007669"/>
    <property type="project" value="UniProtKB-UniRule"/>
</dbReference>
<dbReference type="FunFam" id="2.40.30.10:FF:000004">
    <property type="entry name" value="50S ribosomal protein L3"/>
    <property type="match status" value="1"/>
</dbReference>
<dbReference type="FunFam" id="3.30.160.810:FF:000003">
    <property type="entry name" value="50S ribosomal protein L3"/>
    <property type="match status" value="1"/>
</dbReference>
<dbReference type="Gene3D" id="3.30.160.810">
    <property type="match status" value="1"/>
</dbReference>
<dbReference type="Gene3D" id="2.40.30.10">
    <property type="entry name" value="Translation factors"/>
    <property type="match status" value="1"/>
</dbReference>
<dbReference type="HAMAP" id="MF_01325_B">
    <property type="entry name" value="Ribosomal_uL3_B"/>
    <property type="match status" value="1"/>
</dbReference>
<dbReference type="InterPro" id="IPR000597">
    <property type="entry name" value="Ribosomal_uL3"/>
</dbReference>
<dbReference type="InterPro" id="IPR019927">
    <property type="entry name" value="Ribosomal_uL3_bac/org-type"/>
</dbReference>
<dbReference type="InterPro" id="IPR019926">
    <property type="entry name" value="Ribosomal_uL3_CS"/>
</dbReference>
<dbReference type="InterPro" id="IPR009000">
    <property type="entry name" value="Transl_B-barrel_sf"/>
</dbReference>
<dbReference type="NCBIfam" id="TIGR03625">
    <property type="entry name" value="L3_bact"/>
    <property type="match status" value="1"/>
</dbReference>
<dbReference type="PANTHER" id="PTHR11229">
    <property type="entry name" value="50S RIBOSOMAL PROTEIN L3"/>
    <property type="match status" value="1"/>
</dbReference>
<dbReference type="PANTHER" id="PTHR11229:SF16">
    <property type="entry name" value="LARGE RIBOSOMAL SUBUNIT PROTEIN UL3C"/>
    <property type="match status" value="1"/>
</dbReference>
<dbReference type="Pfam" id="PF00297">
    <property type="entry name" value="Ribosomal_L3"/>
    <property type="match status" value="1"/>
</dbReference>
<dbReference type="SUPFAM" id="SSF50447">
    <property type="entry name" value="Translation proteins"/>
    <property type="match status" value="1"/>
</dbReference>
<dbReference type="PROSITE" id="PS00474">
    <property type="entry name" value="RIBOSOMAL_L3"/>
    <property type="match status" value="1"/>
</dbReference>
<sequence length="218" mass="22942">MTDTKIKGILGTKLGMTQVFDENNRVVPVTVVKAGPNVVTQIRTEERDGYSAVQLAFGAIDPRKVNKPTSGQFAKAGVTPRRHVVELRVADTSEYEVGQELTAEVFEDGAYVDVTGTSKGKGFAGTMKRHGFAGQGASHGAQAVHRRPGSIGGCATPGRVFKGMRMSGRMGSDRITTQNLSVHKVDAENGLLLIKGAIPGRKGGLVIVKSAVKGGARA</sequence>
<accession>Q0S3H6</accession>
<comment type="function">
    <text evidence="1">One of the primary rRNA binding proteins, it binds directly near the 3'-end of the 23S rRNA, where it nucleates assembly of the 50S subunit.</text>
</comment>
<comment type="subunit">
    <text evidence="1">Part of the 50S ribosomal subunit. Forms a cluster with proteins L14 and L19.</text>
</comment>
<comment type="similarity">
    <text evidence="1">Belongs to the universal ribosomal protein uL3 family.</text>
</comment>
<keyword id="KW-0687">Ribonucleoprotein</keyword>
<keyword id="KW-0689">Ribosomal protein</keyword>
<keyword id="KW-0694">RNA-binding</keyword>
<keyword id="KW-0699">rRNA-binding</keyword>